<comment type="function">
    <text evidence="2">Component of a phosphatidic acid/lipid transport complex in the chloroplast envelope. Specifically binds phosphatidic acid (PA). Involved in lipid transfer from the endoplasmic reticulum (ER) to plastids, and necessary for thylakoids formation.</text>
</comment>
<comment type="subunit">
    <text evidence="3 4 5 6">Homomultimer (PubMed:19416982, PubMed:21309871). Substrate-binding subunit of the TGD complex, a lipid translocator at the inner chloroplast envelope membrane made of TGD1, TGD2 and TGD3 (PubMed:21309871, PubMed:22544736). Interacts with TGD1 and TGD3 with an overall subunit stoichiometry of 2 TGD1, 2 TGD3 and 8 to 12 TGD2 (PubMed:22544736). Interacts with TGD5 (PubMed:26410300).</text>
</comment>
<comment type="subcellular location">
    <subcellularLocation>
        <location evidence="2">Plastid</location>
        <location evidence="2">Chloroplast inner membrane</location>
        <topology evidence="1">Single-pass membrane protein</topology>
    </subcellularLocation>
</comment>
<comment type="alternative products">
    <event type="alternative splicing"/>
    <isoform>
        <id>Q9LTR2-1</id>
        <name>1</name>
        <sequence type="displayed"/>
    </isoform>
    <isoform>
        <id>Q9LTR2-2</id>
        <name>2</name>
        <sequence type="described" ref="VSP_037648"/>
    </isoform>
</comment>
<comment type="domain">
    <text evidence="3">Amino acids 201-225 are sufficient for specific binding of phosphatidic acid.</text>
</comment>
<comment type="caution">
    <text evidence="10">Was originally (PubMed:18299247) thought to belong to the ABC transporter family. Lacks the conserved ABC domain, which is one of the features of the ABC transporter family.</text>
</comment>
<comment type="sequence caution" evidence="9">
    <conflict type="erroneous initiation">
        <sequence resource="EMBL-CDS" id="AAM62940"/>
    </conflict>
    <text>Truncated N-terminus.</text>
</comment>
<evidence type="ECO:0000255" key="1"/>
<evidence type="ECO:0000269" key="2">
    <source>
    </source>
</evidence>
<evidence type="ECO:0000269" key="3">
    <source>
    </source>
</evidence>
<evidence type="ECO:0000269" key="4">
    <source>
    </source>
</evidence>
<evidence type="ECO:0000269" key="5">
    <source>
    </source>
</evidence>
<evidence type="ECO:0000269" key="6">
    <source>
    </source>
</evidence>
<evidence type="ECO:0000303" key="7">
    <source>
    </source>
</evidence>
<evidence type="ECO:0000303" key="8">
    <source>
    </source>
</evidence>
<evidence type="ECO:0000305" key="9"/>
<evidence type="ECO:0000305" key="10">
    <source>
    </source>
</evidence>
<evidence type="ECO:0000312" key="11">
    <source>
        <dbReference type="Araport" id="AT3G20320"/>
    </source>
</evidence>
<evidence type="ECO:0000312" key="12">
    <source>
        <dbReference type="EMBL" id="BAB02812.1"/>
    </source>
</evidence>
<keyword id="KW-0025">Alternative splicing</keyword>
<keyword id="KW-0150">Chloroplast</keyword>
<keyword id="KW-0445">Lipid transport</keyword>
<keyword id="KW-0472">Membrane</keyword>
<keyword id="KW-0934">Plastid</keyword>
<keyword id="KW-1001">Plastid inner membrane</keyword>
<keyword id="KW-1185">Reference proteome</keyword>
<keyword id="KW-0809">Transit peptide</keyword>
<keyword id="KW-0812">Transmembrane</keyword>
<keyword id="KW-1133">Transmembrane helix</keyword>
<keyword id="KW-0813">Transport</keyword>
<feature type="transit peptide" description="Chloroplast" evidence="1">
    <location>
        <begin position="1"/>
        <end position="45"/>
    </location>
</feature>
<feature type="chain" id="PRO_0000379145" description="Protein TRIGALACTOSYLDIACYLGLYCEROL 2, chloroplastic">
    <location>
        <begin position="46"/>
        <end position="381"/>
    </location>
</feature>
<feature type="topological domain" description="Stromal" evidence="2">
    <location>
        <begin position="46"/>
        <end position="96"/>
    </location>
</feature>
<feature type="transmembrane region" description="Helical" evidence="1">
    <location>
        <begin position="97"/>
        <end position="117"/>
    </location>
</feature>
<feature type="topological domain" description="Chloroplast intermembrane" evidence="2">
    <location>
        <begin position="118"/>
        <end position="381"/>
    </location>
</feature>
<feature type="splice variant" id="VSP_037648" description="In isoform 2." evidence="9">
    <location>
        <begin position="283"/>
        <end position="381"/>
    </location>
</feature>
<feature type="mutagenesis site" description="In tgd2-3; accumulation of trigalactosyldiacylglycerol." evidence="4">
    <original>G</original>
    <variation>D</variation>
    <location>
        <position position="98"/>
    </location>
</feature>
<feature type="mutagenesis site" description="In tgd2-5; accumulation of trigalactosyldiacylglycerol." evidence="4">
    <original>G</original>
    <variation>S</variation>
    <location>
        <position position="192"/>
    </location>
</feature>
<feature type="mutagenesis site" description="In tgd2-6; accumulation of trigalactosyldiacylglycerol." evidence="4">
    <original>P</original>
    <variation>S</variation>
    <location>
        <position position="203"/>
    </location>
</feature>
<feature type="mutagenesis site" description="Reduced phosphatidic acid binding." evidence="3">
    <original>K</original>
    <variation>A</variation>
    <location>
        <position position="221"/>
    </location>
</feature>
<feature type="mutagenesis site" description="In tgd2-1; loss of function resulting in accumulation of trigalactosyldiacylglycerol and smaller and slightly pale plants." evidence="2 4">
    <original>G</original>
    <variation>R</variation>
    <location>
        <position position="234"/>
    </location>
</feature>
<feature type="mutagenesis site" description="In tgd2-2; accumulation of trigalactosyldiacylglycerol." evidence="4">
    <original>G</original>
    <variation>R</variation>
    <location>
        <position position="237"/>
    </location>
</feature>
<feature type="mutagenesis site" description="In tgd2-4; accumulation of trigalactosyldiacylglycerol." evidence="4">
    <original>G</original>
    <variation>E</variation>
    <location>
        <position position="251"/>
    </location>
</feature>
<accession>Q9LTR2</accession>
<accession>Q3EB35</accession>
<accession>Q8LDY9</accession>
<sequence length="381" mass="41630">MIGNPVIQVPSSLMPSSSMIACPRVSPNGVPYLPPKPRTRHLVVRAASNSDAAHGQPSSDGGKNPLTVVLDVPRNIWRQTLKPLSDFGFGKRSIWEGGVGLFIVSGATLLALSWAWLRGFQMRSKFRKYQTVFELSHASGICTGTPVRIRGVTVGTIIRVNPSLKNIEAVAEIEDDKIIIPRNSLVEVNQSGLLMETMIDIMPRNPIPEPSVGPLHPECGKEGLIVCDRQTIKGVQGVSLDELVGIFTRIGREVEAIGVANTYSLAERAASVIEEARPLLKKIQAMAEDAQPLLSEFRDSGLLKEVECLTRSLTQASDDLRKVNSSIMTPENTELIQKSIYTLVYTLKNVESISSDILGFTGDEATRKNLKLLIKSLSRLL</sequence>
<gene>
    <name evidence="7" type="primary">TGD2</name>
    <name evidence="8" type="synonym">ABCI15</name>
    <name evidence="11" type="ordered locus">At3g20320</name>
    <name evidence="12" type="ORF">MQC12.6</name>
</gene>
<organism>
    <name type="scientific">Arabidopsis thaliana</name>
    <name type="common">Mouse-ear cress</name>
    <dbReference type="NCBI Taxonomy" id="3702"/>
    <lineage>
        <taxon>Eukaryota</taxon>
        <taxon>Viridiplantae</taxon>
        <taxon>Streptophyta</taxon>
        <taxon>Embryophyta</taxon>
        <taxon>Tracheophyta</taxon>
        <taxon>Spermatophyta</taxon>
        <taxon>Magnoliopsida</taxon>
        <taxon>eudicotyledons</taxon>
        <taxon>Gunneridae</taxon>
        <taxon>Pentapetalae</taxon>
        <taxon>rosids</taxon>
        <taxon>malvids</taxon>
        <taxon>Brassicales</taxon>
        <taxon>Brassicaceae</taxon>
        <taxon>Camelineae</taxon>
        <taxon>Arabidopsis</taxon>
    </lineage>
</organism>
<dbReference type="EMBL" id="AB024036">
    <property type="protein sequence ID" value="BAB02812.1"/>
    <property type="molecule type" value="Genomic_DNA"/>
</dbReference>
<dbReference type="EMBL" id="CP002686">
    <property type="protein sequence ID" value="AEE76363.1"/>
    <property type="molecule type" value="Genomic_DNA"/>
</dbReference>
<dbReference type="EMBL" id="CP002686">
    <property type="protein sequence ID" value="AEE76364.1"/>
    <property type="molecule type" value="Genomic_DNA"/>
</dbReference>
<dbReference type="EMBL" id="CP002686">
    <property type="protein sequence ID" value="ANM63486.1"/>
    <property type="molecule type" value="Genomic_DNA"/>
</dbReference>
<dbReference type="EMBL" id="AY048230">
    <property type="protein sequence ID" value="AAK82493.1"/>
    <property type="molecule type" value="mRNA"/>
</dbReference>
<dbReference type="EMBL" id="AY094020">
    <property type="protein sequence ID" value="AAM16176.1"/>
    <property type="molecule type" value="mRNA"/>
</dbReference>
<dbReference type="EMBL" id="AY085722">
    <property type="protein sequence ID" value="AAM62940.1"/>
    <property type="status" value="ALT_INIT"/>
    <property type="molecule type" value="mRNA"/>
</dbReference>
<dbReference type="RefSeq" id="NP_001319601.1">
    <molecule id="Q9LTR2-2"/>
    <property type="nucleotide sequence ID" value="NM_001338475.1"/>
</dbReference>
<dbReference type="RefSeq" id="NP_566659.1">
    <molecule id="Q9LTR2-1"/>
    <property type="nucleotide sequence ID" value="NM_112923.4"/>
</dbReference>
<dbReference type="RefSeq" id="NP_974345.1">
    <molecule id="Q9LTR2-2"/>
    <property type="nucleotide sequence ID" value="NM_202616.1"/>
</dbReference>
<dbReference type="SMR" id="Q9LTR2"/>
<dbReference type="BioGRID" id="6908">
    <property type="interactions" value="7"/>
</dbReference>
<dbReference type="FunCoup" id="Q9LTR2">
    <property type="interactions" value="1470"/>
</dbReference>
<dbReference type="IntAct" id="Q9LTR2">
    <property type="interactions" value="4"/>
</dbReference>
<dbReference type="STRING" id="3702.Q9LTR2"/>
<dbReference type="TCDB" id="3.A.1.27.2">
    <property type="family name" value="the atp-binding cassette (abc) superfamily"/>
</dbReference>
<dbReference type="SwissPalm" id="Q9LTR2"/>
<dbReference type="PaxDb" id="3702-AT3G20320.1"/>
<dbReference type="ProteomicsDB" id="234407">
    <molecule id="Q9LTR2-1"/>
</dbReference>
<dbReference type="EnsemblPlants" id="AT3G20320.1">
    <molecule id="Q9LTR2-1"/>
    <property type="protein sequence ID" value="AT3G20320.1"/>
    <property type="gene ID" value="AT3G20320"/>
</dbReference>
<dbReference type="EnsemblPlants" id="AT3G20320.2">
    <molecule id="Q9LTR2-2"/>
    <property type="protein sequence ID" value="AT3G20320.2"/>
    <property type="gene ID" value="AT3G20320"/>
</dbReference>
<dbReference type="EnsemblPlants" id="AT3G20320.3">
    <molecule id="Q9LTR2-2"/>
    <property type="protein sequence ID" value="AT3G20320.3"/>
    <property type="gene ID" value="AT3G20320"/>
</dbReference>
<dbReference type="GeneID" id="821576"/>
<dbReference type="Gramene" id="AT3G20320.1">
    <molecule id="Q9LTR2-1"/>
    <property type="protein sequence ID" value="AT3G20320.1"/>
    <property type="gene ID" value="AT3G20320"/>
</dbReference>
<dbReference type="Gramene" id="AT3G20320.2">
    <molecule id="Q9LTR2-2"/>
    <property type="protein sequence ID" value="AT3G20320.2"/>
    <property type="gene ID" value="AT3G20320"/>
</dbReference>
<dbReference type="Gramene" id="AT3G20320.3">
    <molecule id="Q9LTR2-2"/>
    <property type="protein sequence ID" value="AT3G20320.3"/>
    <property type="gene ID" value="AT3G20320"/>
</dbReference>
<dbReference type="KEGG" id="ath:AT3G20320"/>
<dbReference type="Araport" id="AT3G20320"/>
<dbReference type="TAIR" id="AT3G20320">
    <property type="gene designation" value="ABCI15"/>
</dbReference>
<dbReference type="eggNOG" id="ENOG502QY75">
    <property type="taxonomic scope" value="Eukaryota"/>
</dbReference>
<dbReference type="HOGENOM" id="CLU_050607_0_0_1"/>
<dbReference type="InParanoid" id="Q9LTR2"/>
<dbReference type="OMA" id="WYLFAEF"/>
<dbReference type="OrthoDB" id="1924069at2759"/>
<dbReference type="PhylomeDB" id="Q9LTR2"/>
<dbReference type="PRO" id="PR:Q9LTR2"/>
<dbReference type="Proteomes" id="UP000006548">
    <property type="component" value="Chromosome 3"/>
</dbReference>
<dbReference type="ExpressionAtlas" id="Q9LTR2">
    <property type="expression patterns" value="baseline and differential"/>
</dbReference>
<dbReference type="GO" id="GO:0009507">
    <property type="term" value="C:chloroplast"/>
    <property type="evidence" value="ECO:0007005"/>
    <property type="project" value="TAIR"/>
</dbReference>
<dbReference type="GO" id="GO:0009941">
    <property type="term" value="C:chloroplast envelope"/>
    <property type="evidence" value="ECO:0007005"/>
    <property type="project" value="TAIR"/>
</dbReference>
<dbReference type="GO" id="GO:0009706">
    <property type="term" value="C:chloroplast inner membrane"/>
    <property type="evidence" value="ECO:0000314"/>
    <property type="project" value="TAIR"/>
</dbReference>
<dbReference type="GO" id="GO:0005829">
    <property type="term" value="C:cytosol"/>
    <property type="evidence" value="ECO:0007005"/>
    <property type="project" value="TAIR"/>
</dbReference>
<dbReference type="GO" id="GO:0009536">
    <property type="term" value="C:plastid"/>
    <property type="evidence" value="ECO:0007005"/>
    <property type="project" value="TAIR"/>
</dbReference>
<dbReference type="GO" id="GO:0005319">
    <property type="term" value="F:lipid transporter activity"/>
    <property type="evidence" value="ECO:0000315"/>
    <property type="project" value="TAIR"/>
</dbReference>
<dbReference type="GO" id="GO:0005543">
    <property type="term" value="F:phospholipid binding"/>
    <property type="evidence" value="ECO:0000314"/>
    <property type="project" value="TAIR"/>
</dbReference>
<dbReference type="GO" id="GO:0032365">
    <property type="term" value="P:intracellular lipid transport"/>
    <property type="evidence" value="ECO:0000315"/>
    <property type="project" value="TAIR"/>
</dbReference>
<dbReference type="GO" id="GO:0006869">
    <property type="term" value="P:lipid transport"/>
    <property type="evidence" value="ECO:0000315"/>
    <property type="project" value="TAIR"/>
</dbReference>
<dbReference type="InterPro" id="IPR003399">
    <property type="entry name" value="Mce/MlaD"/>
</dbReference>
<dbReference type="InterPro" id="IPR039342">
    <property type="entry name" value="TGD2-like"/>
</dbReference>
<dbReference type="PANTHER" id="PTHR34675">
    <property type="entry name" value="PROTEIN TRIGALACTOSYLDIACYLGLYCEROL 2, CHLOROPLASTIC"/>
    <property type="match status" value="1"/>
</dbReference>
<dbReference type="PANTHER" id="PTHR34675:SF1">
    <property type="entry name" value="PROTEIN TRIGALACTOSYLDIACYLGLYCEROL 2, CHLOROPLASTIC"/>
    <property type="match status" value="1"/>
</dbReference>
<dbReference type="Pfam" id="PF02470">
    <property type="entry name" value="MlaD"/>
    <property type="match status" value="1"/>
</dbReference>
<reference key="1">
    <citation type="journal article" date="2006" name="Proc. Natl. Acad. Sci. U.S.A.">
        <title>A phosphatidic acid-binding protein of the chloroplast inner envelope membrane involved in lipid trafficking.</title>
        <authorList>
            <person name="Awai K."/>
            <person name="Xu C."/>
            <person name="Tamot B."/>
            <person name="Benning C."/>
        </authorList>
    </citation>
    <scope>NUCLEOTIDE SEQUENCE [MRNA] (ISOFORM 1)</scope>
    <scope>FUNCTION</scope>
    <scope>MUTAGENESIS OF GLY-234</scope>
    <scope>SUBCELLULAR LOCATION</scope>
    <scope>TOPOLOGY</scope>
</reference>
<reference key="2">
    <citation type="journal article" date="2000" name="DNA Res.">
        <title>Structural analysis of Arabidopsis thaliana chromosome 3. I. Sequence features of the regions of 4,504,864 bp covered by sixty P1 and TAC clones.</title>
        <authorList>
            <person name="Sato S."/>
            <person name="Nakamura Y."/>
            <person name="Kaneko T."/>
            <person name="Katoh T."/>
            <person name="Asamizu E."/>
            <person name="Tabata S."/>
        </authorList>
    </citation>
    <scope>NUCLEOTIDE SEQUENCE [LARGE SCALE GENOMIC DNA]</scope>
    <source>
        <strain>cv. Columbia</strain>
    </source>
</reference>
<reference key="3">
    <citation type="journal article" date="2017" name="Plant J.">
        <title>Araport11: a complete reannotation of the Arabidopsis thaliana reference genome.</title>
        <authorList>
            <person name="Cheng C.Y."/>
            <person name="Krishnakumar V."/>
            <person name="Chan A.P."/>
            <person name="Thibaud-Nissen F."/>
            <person name="Schobel S."/>
            <person name="Town C.D."/>
        </authorList>
    </citation>
    <scope>GENOME REANNOTATION</scope>
    <source>
        <strain>cv. Columbia</strain>
    </source>
</reference>
<reference key="4">
    <citation type="journal article" date="2003" name="Science">
        <title>Empirical analysis of transcriptional activity in the Arabidopsis genome.</title>
        <authorList>
            <person name="Yamada K."/>
            <person name="Lim J."/>
            <person name="Dale J.M."/>
            <person name="Chen H."/>
            <person name="Shinn P."/>
            <person name="Palm C.J."/>
            <person name="Southwick A.M."/>
            <person name="Wu H.C."/>
            <person name="Kim C.J."/>
            <person name="Nguyen M."/>
            <person name="Pham P.K."/>
            <person name="Cheuk R.F."/>
            <person name="Karlin-Newmann G."/>
            <person name="Liu S.X."/>
            <person name="Lam B."/>
            <person name="Sakano H."/>
            <person name="Wu T."/>
            <person name="Yu G."/>
            <person name="Miranda M."/>
            <person name="Quach H.L."/>
            <person name="Tripp M."/>
            <person name="Chang C.H."/>
            <person name="Lee J.M."/>
            <person name="Toriumi M.J."/>
            <person name="Chan M.M."/>
            <person name="Tang C.C."/>
            <person name="Onodera C.S."/>
            <person name="Deng J.M."/>
            <person name="Akiyama K."/>
            <person name="Ansari Y."/>
            <person name="Arakawa T."/>
            <person name="Banh J."/>
            <person name="Banno F."/>
            <person name="Bowser L."/>
            <person name="Brooks S.Y."/>
            <person name="Carninci P."/>
            <person name="Chao Q."/>
            <person name="Choy N."/>
            <person name="Enju A."/>
            <person name="Goldsmith A.D."/>
            <person name="Gurjal M."/>
            <person name="Hansen N.F."/>
            <person name="Hayashizaki Y."/>
            <person name="Johnson-Hopson C."/>
            <person name="Hsuan V.W."/>
            <person name="Iida K."/>
            <person name="Karnes M."/>
            <person name="Khan S."/>
            <person name="Koesema E."/>
            <person name="Ishida J."/>
            <person name="Jiang P.X."/>
            <person name="Jones T."/>
            <person name="Kawai J."/>
            <person name="Kamiya A."/>
            <person name="Meyers C."/>
            <person name="Nakajima M."/>
            <person name="Narusaka M."/>
            <person name="Seki M."/>
            <person name="Sakurai T."/>
            <person name="Satou M."/>
            <person name="Tamse R."/>
            <person name="Vaysberg M."/>
            <person name="Wallender E.K."/>
            <person name="Wong C."/>
            <person name="Yamamura Y."/>
            <person name="Yuan S."/>
            <person name="Shinozaki K."/>
            <person name="Davis R.W."/>
            <person name="Theologis A."/>
            <person name="Ecker J.R."/>
        </authorList>
    </citation>
    <scope>NUCLEOTIDE SEQUENCE [LARGE SCALE MRNA] (IOSOFORM 1)</scope>
    <source>
        <strain>cv. Columbia</strain>
    </source>
</reference>
<reference key="5">
    <citation type="submission" date="2002-03" db="EMBL/GenBank/DDBJ databases">
        <title>Full-length cDNA from Arabidopsis thaliana.</title>
        <authorList>
            <person name="Brover V.V."/>
            <person name="Troukhan M.E."/>
            <person name="Alexandrov N.A."/>
            <person name="Lu Y.-P."/>
            <person name="Flavell R.B."/>
            <person name="Feldmann K.A."/>
        </authorList>
    </citation>
    <scope>NUCLEOTIDE SEQUENCE [LARGE SCALE MRNA] (IOSOFORM 1)</scope>
</reference>
<reference key="6">
    <citation type="journal article" date="2008" name="Trends Plant Sci.">
        <title>Plant ABC proteins - a unified nomenclature and updated inventory.</title>
        <authorList>
            <person name="Verrier P.J."/>
            <person name="Bird D."/>
            <person name="Burla B."/>
            <person name="Dassa E."/>
            <person name="Forestier C."/>
            <person name="Geisler M."/>
            <person name="Klein M."/>
            <person name="Kolukisaoglu H.U."/>
            <person name="Lee Y."/>
            <person name="Martinoia E."/>
            <person name="Murphy A."/>
            <person name="Rea P.A."/>
            <person name="Samuels L."/>
            <person name="Schulz B."/>
            <person name="Spalding E.J."/>
            <person name="Yazaki K."/>
            <person name="Theodoulou F.L."/>
        </authorList>
    </citation>
    <scope>GENE FAMILY</scope>
    <scope>NOMENCLATURE</scope>
</reference>
<reference key="7">
    <citation type="journal article" date="2009" name="J. Biol. Chem.">
        <title>A 25-amino acid sequence of the Arabidopsis TGD2 protein is sufficient for specific binding of phosphatidic acid.</title>
        <authorList>
            <person name="Lu B."/>
            <person name="Benning C."/>
        </authorList>
    </citation>
    <scope>SUBUNIT</scope>
    <scope>DOMAIN</scope>
    <scope>MUTAGENESIS OF LYS-221</scope>
</reference>
<reference key="8">
    <citation type="journal article" date="2011" name="Plant J.">
        <title>Arabidopsis chloroplast lipid transport protein TGD2 disrupts membranes and is part of a large complex.</title>
        <authorList>
            <person name="Roston R."/>
            <person name="Gao J."/>
            <person name="Xu C."/>
            <person name="Benning C."/>
        </authorList>
    </citation>
    <scope>SUBUNIT</scope>
    <scope>MUTAGENESIS OF GLY-98; GLY-192; PRO-203; GLY-234; GLY-237 AND GLY-251</scope>
</reference>
<reference key="9">
    <citation type="journal article" date="2012" name="J. Biol. Chem.">
        <title>TGD1, -2, and -3 proteins involved in lipid trafficking form ATP-binding cassette (ABC) transporter with multiple substrate-binding proteins.</title>
        <authorList>
            <person name="Roston R.L."/>
            <person name="Gao J."/>
            <person name="Murcha M.W."/>
            <person name="Whelan J."/>
            <person name="Benning C."/>
        </authorList>
    </citation>
    <scope>IDENTIFICATION IN THE TGD COMPLEX</scope>
    <scope>INTERACTION WITH TGD1 AND TGD3</scope>
</reference>
<reference key="10">
    <citation type="journal article" date="2015" name="Plant Cell">
        <title>Arabidopsis TRIGALACTOSYLDIACYLGLYCEROL5 interacts with TGD1, TGD2, and TGD4 to facilitate lipid transfer from the endoplasmic reticulum to plastids.</title>
        <authorList>
            <person name="Fan J."/>
            <person name="Zhai Z."/>
            <person name="Yan C."/>
            <person name="Xu C."/>
        </authorList>
    </citation>
    <scope>INTERACTION WITH TGD5</scope>
</reference>
<name>TGD2_ARATH</name>
<proteinExistence type="evidence at protein level"/>
<protein>
    <recommendedName>
        <fullName evidence="7">Protein TRIGALACTOSYLDIACYLGLYCEROL 2, chloroplastic</fullName>
    </recommendedName>
    <alternativeName>
        <fullName evidence="8">ABC transporter I family member 15</fullName>
        <shortName evidence="8">ABC transporter ABCI.15</shortName>
        <shortName evidence="8">AtABCI15</shortName>
    </alternativeName>
</protein>